<protein>
    <recommendedName>
        <fullName evidence="1">UPF0235 protein Ent638_3359</fullName>
    </recommendedName>
</protein>
<organism>
    <name type="scientific">Enterobacter sp. (strain 638)</name>
    <dbReference type="NCBI Taxonomy" id="399742"/>
    <lineage>
        <taxon>Bacteria</taxon>
        <taxon>Pseudomonadati</taxon>
        <taxon>Pseudomonadota</taxon>
        <taxon>Gammaproteobacteria</taxon>
        <taxon>Enterobacterales</taxon>
        <taxon>Enterobacteriaceae</taxon>
        <taxon>Enterobacter</taxon>
    </lineage>
</organism>
<dbReference type="EMBL" id="CP000653">
    <property type="protein sequence ID" value="ABP62021.1"/>
    <property type="molecule type" value="Genomic_DNA"/>
</dbReference>
<dbReference type="RefSeq" id="WP_015960349.1">
    <property type="nucleotide sequence ID" value="NC_009436.1"/>
</dbReference>
<dbReference type="SMR" id="A4WE91"/>
<dbReference type="STRING" id="399742.Ent638_3359"/>
<dbReference type="KEGG" id="ent:Ent638_3359"/>
<dbReference type="eggNOG" id="COG1872">
    <property type="taxonomic scope" value="Bacteria"/>
</dbReference>
<dbReference type="HOGENOM" id="CLU_130694_5_0_6"/>
<dbReference type="OrthoDB" id="9800587at2"/>
<dbReference type="Proteomes" id="UP000000230">
    <property type="component" value="Chromosome"/>
</dbReference>
<dbReference type="GO" id="GO:0005737">
    <property type="term" value="C:cytoplasm"/>
    <property type="evidence" value="ECO:0007669"/>
    <property type="project" value="TreeGrafter"/>
</dbReference>
<dbReference type="Gene3D" id="3.30.1200.10">
    <property type="entry name" value="YggU-like"/>
    <property type="match status" value="1"/>
</dbReference>
<dbReference type="HAMAP" id="MF_00634">
    <property type="entry name" value="UPF0235"/>
    <property type="match status" value="1"/>
</dbReference>
<dbReference type="InterPro" id="IPR003746">
    <property type="entry name" value="DUF167"/>
</dbReference>
<dbReference type="InterPro" id="IPR036591">
    <property type="entry name" value="YggU-like_sf"/>
</dbReference>
<dbReference type="NCBIfam" id="TIGR00251">
    <property type="entry name" value="DUF167 family protein"/>
    <property type="match status" value="1"/>
</dbReference>
<dbReference type="NCBIfam" id="NF003466">
    <property type="entry name" value="PRK05090.1"/>
    <property type="match status" value="1"/>
</dbReference>
<dbReference type="PANTHER" id="PTHR13420">
    <property type="entry name" value="UPF0235 PROTEIN C15ORF40"/>
    <property type="match status" value="1"/>
</dbReference>
<dbReference type="PANTHER" id="PTHR13420:SF7">
    <property type="entry name" value="UPF0235 PROTEIN C15ORF40"/>
    <property type="match status" value="1"/>
</dbReference>
<dbReference type="Pfam" id="PF02594">
    <property type="entry name" value="DUF167"/>
    <property type="match status" value="1"/>
</dbReference>
<dbReference type="SMART" id="SM01152">
    <property type="entry name" value="DUF167"/>
    <property type="match status" value="1"/>
</dbReference>
<dbReference type="SUPFAM" id="SSF69786">
    <property type="entry name" value="YggU-like"/>
    <property type="match status" value="1"/>
</dbReference>
<reference key="1">
    <citation type="journal article" date="2010" name="PLoS Genet.">
        <title>Genome sequence of the plant growth promoting endophytic bacterium Enterobacter sp. 638.</title>
        <authorList>
            <person name="Taghavi S."/>
            <person name="van der Lelie D."/>
            <person name="Hoffman A."/>
            <person name="Zhang Y.B."/>
            <person name="Walla M.D."/>
            <person name="Vangronsveld J."/>
            <person name="Newman L."/>
            <person name="Monchy S."/>
        </authorList>
    </citation>
    <scope>NUCLEOTIDE SEQUENCE [LARGE SCALE GENOMIC DNA]</scope>
    <source>
        <strain>638</strain>
    </source>
</reference>
<evidence type="ECO:0000255" key="1">
    <source>
        <dbReference type="HAMAP-Rule" id="MF_00634"/>
    </source>
</evidence>
<feature type="chain" id="PRO_1000061423" description="UPF0235 protein Ent638_3359">
    <location>
        <begin position="1"/>
        <end position="96"/>
    </location>
</feature>
<name>Y3359_ENT38</name>
<sequence length="96" mass="10371">MSAVSTCADGLVLRLYIQPKASRDSIVGLHGDELKVAITAPPVDGQANAHLTKYLAKQFRVAKSQVIIEKGELGRHKQVKILNPQNIPTEVAALTE</sequence>
<accession>A4WE91</accession>
<comment type="similarity">
    <text evidence="1">Belongs to the UPF0235 family.</text>
</comment>
<gene>
    <name type="ordered locus">Ent638_3359</name>
</gene>
<proteinExistence type="inferred from homology"/>